<proteinExistence type="inferred from homology"/>
<feature type="chain" id="PRO_0000134757" description="6,7-dimethyl-8-ribityllumazine synthase">
    <location>
        <begin position="1"/>
        <end position="153"/>
    </location>
</feature>
<feature type="active site" description="Proton donor" evidence="1">
    <location>
        <position position="88"/>
    </location>
</feature>
<feature type="binding site" evidence="1">
    <location>
        <position position="22"/>
    </location>
    <ligand>
        <name>5-amino-6-(D-ribitylamino)uracil</name>
        <dbReference type="ChEBI" id="CHEBI:15934"/>
    </ligand>
</feature>
<feature type="binding site" evidence="1">
    <location>
        <begin position="56"/>
        <end position="58"/>
    </location>
    <ligand>
        <name>5-amino-6-(D-ribitylamino)uracil</name>
        <dbReference type="ChEBI" id="CHEBI:15934"/>
    </ligand>
</feature>
<feature type="binding site" evidence="1">
    <location>
        <begin position="80"/>
        <end position="82"/>
    </location>
    <ligand>
        <name>5-amino-6-(D-ribitylamino)uracil</name>
        <dbReference type="ChEBI" id="CHEBI:15934"/>
    </ligand>
</feature>
<feature type="binding site" evidence="1">
    <location>
        <begin position="85"/>
        <end position="86"/>
    </location>
    <ligand>
        <name>(2S)-2-hydroxy-3-oxobutyl phosphate</name>
        <dbReference type="ChEBI" id="CHEBI:58830"/>
    </ligand>
</feature>
<feature type="binding site" evidence="1">
    <location>
        <position position="113"/>
    </location>
    <ligand>
        <name>5-amino-6-(D-ribitylamino)uracil</name>
        <dbReference type="ChEBI" id="CHEBI:15934"/>
    </ligand>
</feature>
<feature type="binding site" evidence="1">
    <location>
        <position position="127"/>
    </location>
    <ligand>
        <name>(2S)-2-hydroxy-3-oxobutyl phosphate</name>
        <dbReference type="ChEBI" id="CHEBI:58830"/>
    </ligand>
</feature>
<gene>
    <name evidence="1" type="primary">ribH</name>
    <name type="ordered locus">FN1505</name>
</gene>
<protein>
    <recommendedName>
        <fullName evidence="1">6,7-dimethyl-8-ribityllumazine synthase</fullName>
        <shortName evidence="1">DMRL synthase</shortName>
        <shortName evidence="1">LS</shortName>
        <shortName evidence="1">Lumazine synthase</shortName>
        <ecNumber evidence="1">2.5.1.78</ecNumber>
    </recommendedName>
</protein>
<evidence type="ECO:0000255" key="1">
    <source>
        <dbReference type="HAMAP-Rule" id="MF_00178"/>
    </source>
</evidence>
<evidence type="ECO:0000305" key="2"/>
<reference key="1">
    <citation type="journal article" date="2002" name="J. Bacteriol.">
        <title>Genome sequence and analysis of the oral bacterium Fusobacterium nucleatum strain ATCC 25586.</title>
        <authorList>
            <person name="Kapatral V."/>
            <person name="Anderson I."/>
            <person name="Ivanova N."/>
            <person name="Reznik G."/>
            <person name="Los T."/>
            <person name="Lykidis A."/>
            <person name="Bhattacharyya A."/>
            <person name="Bartman A."/>
            <person name="Gardner W."/>
            <person name="Grechkin G."/>
            <person name="Zhu L."/>
            <person name="Vasieva O."/>
            <person name="Chu L."/>
            <person name="Kogan Y."/>
            <person name="Chaga O."/>
            <person name="Goltsman E."/>
            <person name="Bernal A."/>
            <person name="Larsen N."/>
            <person name="D'Souza M."/>
            <person name="Walunas T."/>
            <person name="Pusch G."/>
            <person name="Haselkorn R."/>
            <person name="Fonstein M."/>
            <person name="Kyrpides N.C."/>
            <person name="Overbeek R."/>
        </authorList>
    </citation>
    <scope>NUCLEOTIDE SEQUENCE [LARGE SCALE GENOMIC DNA]</scope>
    <source>
        <strain>ATCC 25586 / DSM 15643 / BCRC 10681 / CIP 101130 / JCM 8532 / KCTC 2640 / LMG 13131 / VPI 4355</strain>
    </source>
</reference>
<organism>
    <name type="scientific">Fusobacterium nucleatum subsp. nucleatum (strain ATCC 25586 / DSM 15643 / BCRC 10681 / CIP 101130 / JCM 8532 / KCTC 2640 / LMG 13131 / VPI 4355)</name>
    <dbReference type="NCBI Taxonomy" id="190304"/>
    <lineage>
        <taxon>Bacteria</taxon>
        <taxon>Fusobacteriati</taxon>
        <taxon>Fusobacteriota</taxon>
        <taxon>Fusobacteriia</taxon>
        <taxon>Fusobacteriales</taxon>
        <taxon>Fusobacteriaceae</taxon>
        <taxon>Fusobacterium</taxon>
    </lineage>
</organism>
<name>RISB_FUSNN</name>
<accession>Q8RIR4</accession>
<dbReference type="EC" id="2.5.1.78" evidence="1"/>
<dbReference type="EMBL" id="AE009951">
    <property type="protein sequence ID" value="AAL93631.1"/>
    <property type="status" value="ALT_INIT"/>
    <property type="molecule type" value="Genomic_DNA"/>
</dbReference>
<dbReference type="RefSeq" id="NP_602332.1">
    <property type="nucleotide sequence ID" value="NC_003454.1"/>
</dbReference>
<dbReference type="SMR" id="Q8RIR4"/>
<dbReference type="FunCoup" id="Q8RIR4">
    <property type="interactions" value="365"/>
</dbReference>
<dbReference type="STRING" id="190304.FN1505"/>
<dbReference type="PaxDb" id="190304-FN1505"/>
<dbReference type="EnsemblBacteria" id="AAL93631">
    <property type="protein sequence ID" value="AAL93631"/>
    <property type="gene ID" value="FN1505"/>
</dbReference>
<dbReference type="KEGG" id="fnu:FN1505"/>
<dbReference type="PATRIC" id="fig|190304.8.peg.10"/>
<dbReference type="eggNOG" id="COG0054">
    <property type="taxonomic scope" value="Bacteria"/>
</dbReference>
<dbReference type="HOGENOM" id="CLU_089358_1_1_0"/>
<dbReference type="InParanoid" id="Q8RIR4"/>
<dbReference type="BRENDA" id="2.5.1.78">
    <property type="organism ID" value="2370"/>
</dbReference>
<dbReference type="UniPathway" id="UPA00275">
    <property type="reaction ID" value="UER00404"/>
</dbReference>
<dbReference type="Proteomes" id="UP000002521">
    <property type="component" value="Chromosome"/>
</dbReference>
<dbReference type="GO" id="GO:0005737">
    <property type="term" value="C:cytoplasm"/>
    <property type="evidence" value="ECO:0000318"/>
    <property type="project" value="GO_Central"/>
</dbReference>
<dbReference type="GO" id="GO:0005829">
    <property type="term" value="C:cytosol"/>
    <property type="evidence" value="ECO:0000318"/>
    <property type="project" value="GO_Central"/>
</dbReference>
<dbReference type="GO" id="GO:0009349">
    <property type="term" value="C:riboflavin synthase complex"/>
    <property type="evidence" value="ECO:0007669"/>
    <property type="project" value="InterPro"/>
</dbReference>
<dbReference type="GO" id="GO:0000906">
    <property type="term" value="F:6,7-dimethyl-8-ribityllumazine synthase activity"/>
    <property type="evidence" value="ECO:0000318"/>
    <property type="project" value="GO_Central"/>
</dbReference>
<dbReference type="GO" id="GO:0009231">
    <property type="term" value="P:riboflavin biosynthetic process"/>
    <property type="evidence" value="ECO:0000318"/>
    <property type="project" value="GO_Central"/>
</dbReference>
<dbReference type="CDD" id="cd09209">
    <property type="entry name" value="Lumazine_synthase-I"/>
    <property type="match status" value="1"/>
</dbReference>
<dbReference type="FunFam" id="3.40.50.960:FF:000001">
    <property type="entry name" value="6,7-dimethyl-8-ribityllumazine synthase"/>
    <property type="match status" value="1"/>
</dbReference>
<dbReference type="Gene3D" id="3.40.50.960">
    <property type="entry name" value="Lumazine/riboflavin synthase"/>
    <property type="match status" value="1"/>
</dbReference>
<dbReference type="HAMAP" id="MF_00178">
    <property type="entry name" value="Lumazine_synth"/>
    <property type="match status" value="1"/>
</dbReference>
<dbReference type="InterPro" id="IPR034964">
    <property type="entry name" value="LS"/>
</dbReference>
<dbReference type="InterPro" id="IPR002180">
    <property type="entry name" value="LS/RS"/>
</dbReference>
<dbReference type="InterPro" id="IPR036467">
    <property type="entry name" value="LS/RS_sf"/>
</dbReference>
<dbReference type="NCBIfam" id="TIGR00114">
    <property type="entry name" value="lumazine-synth"/>
    <property type="match status" value="1"/>
</dbReference>
<dbReference type="NCBIfam" id="NF000812">
    <property type="entry name" value="PRK00061.1-4"/>
    <property type="match status" value="1"/>
</dbReference>
<dbReference type="PANTHER" id="PTHR21058:SF0">
    <property type="entry name" value="6,7-DIMETHYL-8-RIBITYLLUMAZINE SYNTHASE"/>
    <property type="match status" value="1"/>
</dbReference>
<dbReference type="PANTHER" id="PTHR21058">
    <property type="entry name" value="6,7-DIMETHYL-8-RIBITYLLUMAZINE SYNTHASE DMRL SYNTHASE LUMAZINE SYNTHASE"/>
    <property type="match status" value="1"/>
</dbReference>
<dbReference type="Pfam" id="PF00885">
    <property type="entry name" value="DMRL_synthase"/>
    <property type="match status" value="1"/>
</dbReference>
<dbReference type="SUPFAM" id="SSF52121">
    <property type="entry name" value="Lumazine synthase"/>
    <property type="match status" value="1"/>
</dbReference>
<comment type="function">
    <text evidence="1">Catalyzes the formation of 6,7-dimethyl-8-ribityllumazine by condensation of 5-amino-6-(D-ribitylamino)uracil with 3,4-dihydroxy-2-butanone 4-phosphate. This is the penultimate step in the biosynthesis of riboflavin.</text>
</comment>
<comment type="catalytic activity">
    <reaction evidence="1">
        <text>(2S)-2-hydroxy-3-oxobutyl phosphate + 5-amino-6-(D-ribitylamino)uracil = 6,7-dimethyl-8-(1-D-ribityl)lumazine + phosphate + 2 H2O + H(+)</text>
        <dbReference type="Rhea" id="RHEA:26152"/>
        <dbReference type="ChEBI" id="CHEBI:15377"/>
        <dbReference type="ChEBI" id="CHEBI:15378"/>
        <dbReference type="ChEBI" id="CHEBI:15934"/>
        <dbReference type="ChEBI" id="CHEBI:43474"/>
        <dbReference type="ChEBI" id="CHEBI:58201"/>
        <dbReference type="ChEBI" id="CHEBI:58830"/>
        <dbReference type="EC" id="2.5.1.78"/>
    </reaction>
</comment>
<comment type="pathway">
    <text evidence="1">Cofactor biosynthesis; riboflavin biosynthesis; riboflavin from 2-hydroxy-3-oxobutyl phosphate and 5-amino-6-(D-ribitylamino)uracil: step 1/2.</text>
</comment>
<comment type="similarity">
    <text evidence="1">Belongs to the DMRL synthase family.</text>
</comment>
<comment type="sequence caution" evidence="2">
    <conflict type="erroneous initiation">
        <sequence resource="EMBL-CDS" id="AAL93631"/>
    </conflict>
</comment>
<keyword id="KW-1185">Reference proteome</keyword>
<keyword id="KW-0686">Riboflavin biosynthesis</keyword>
<keyword id="KW-0808">Transferase</keyword>
<sequence>MKVFEGKFNGKGTKIAIVAARFNEFITSKLIGGAEDILKRHEVQDDDINLFWVPGAFEIPLIAKKLAQSKKYDAVITLGAVIKGSTPHFDYVCAEVSKGVAHVSLESEVPVIFGVLTTNSIEEAIERAGTKAGNKGADAAMTAIEMINLIKGI</sequence>